<comment type="function">
    <text evidence="2">Ion channel inhibitor that inhibits the increase in intracellular calcium upon depolarization in DRG neurons. In vivo, both intraperitoneal and intracranial injections into mice induce hyperactivity.</text>
</comment>
<comment type="subcellular location">
    <subcellularLocation>
        <location evidence="6">Secreted</location>
    </subcellularLocation>
</comment>
<comment type="tissue specificity">
    <text evidence="6">Expressed by the venom duct.</text>
</comment>
<comment type="domain">
    <text evidence="5">The presence of a 'disulfide through disulfide knot' structurally defines this protein as a knottin.</text>
</comment>
<comment type="domain">
    <text evidence="5">The cysteine framework is VI/VII (C-C-CC-C-C).</text>
</comment>
<comment type="similarity">
    <text evidence="5">Belongs to the conotoxin O1 superfamily.</text>
</comment>
<dbReference type="SMR" id="P0DW77"/>
<dbReference type="GO" id="GO:0005576">
    <property type="term" value="C:extracellular region"/>
    <property type="evidence" value="ECO:0007669"/>
    <property type="project" value="UniProtKB-SubCell"/>
</dbReference>
<dbReference type="GO" id="GO:0008200">
    <property type="term" value="F:ion channel inhibitor activity"/>
    <property type="evidence" value="ECO:0007669"/>
    <property type="project" value="InterPro"/>
</dbReference>
<dbReference type="GO" id="GO:0090729">
    <property type="term" value="F:toxin activity"/>
    <property type="evidence" value="ECO:0007669"/>
    <property type="project" value="UniProtKB-KW"/>
</dbReference>
<dbReference type="InterPro" id="IPR004214">
    <property type="entry name" value="Conotoxin"/>
</dbReference>
<dbReference type="Pfam" id="PF02950">
    <property type="entry name" value="Conotoxin"/>
    <property type="match status" value="1"/>
</dbReference>
<protein>
    <recommendedName>
        <fullName evidence="4">Conotoxin Tr6.2</fullName>
    </recommendedName>
</protein>
<reference key="1">
    <citation type="journal article" date="2016" name="Toxicon">
        <title>Glycine-rich conotoxins from the Virgiconus clade.</title>
        <authorList>
            <person name="Espino S.S."/>
            <person name="Dilanyan T."/>
            <person name="Imperial J.S."/>
            <person name="Aguilar M.B."/>
            <person name="Teichert R.W."/>
            <person name="Bandyopadhyay P."/>
            <person name="Olivera B.M."/>
        </authorList>
    </citation>
    <scope>NUCLEOTIDE SEQUENCE [MRNA]</scope>
    <source>
        <tissue>Venom duct</tissue>
    </source>
</reference>
<sequence>MKLTCVLIISVLFLTASQLITAVYSRDKQQYRAARLRDEMRNLKGARDCGEQGQGCYTRPCCPGLECRGGGTGGGVCQQ</sequence>
<evidence type="ECO:0000250" key="1">
    <source>
        <dbReference type="UniProtKB" id="P60179"/>
    </source>
</evidence>
<evidence type="ECO:0000250" key="2">
    <source>
        <dbReference type="UniProtKB" id="Q5K0C7"/>
    </source>
</evidence>
<evidence type="ECO:0000255" key="3"/>
<evidence type="ECO:0000303" key="4">
    <source>
    </source>
</evidence>
<evidence type="ECO:0000305" key="5"/>
<evidence type="ECO:0000305" key="6">
    <source>
    </source>
</evidence>
<feature type="signal peptide" evidence="3">
    <location>
        <begin position="1"/>
        <end position="22"/>
    </location>
</feature>
<feature type="propeptide" id="PRO_0000456330" evidence="2">
    <location>
        <begin position="23"/>
        <end position="47"/>
    </location>
</feature>
<feature type="peptide" id="PRO_0000456331" description="Conotoxin Tr6.2" evidence="2">
    <location>
        <begin position="48"/>
        <end position="79"/>
    </location>
</feature>
<feature type="modified residue" description="4-hydroxyproline" evidence="2">
    <location>
        <position position="60"/>
    </location>
</feature>
<feature type="modified residue" description="4-hydroxyproline" evidence="2">
    <location>
        <position position="63"/>
    </location>
</feature>
<feature type="disulfide bond" evidence="1">
    <location>
        <begin position="49"/>
        <end position="62"/>
    </location>
</feature>
<feature type="disulfide bond" evidence="1">
    <location>
        <begin position="56"/>
        <end position="67"/>
    </location>
</feature>
<feature type="disulfide bond" evidence="1">
    <location>
        <begin position="61"/>
        <end position="77"/>
    </location>
</feature>
<proteinExistence type="inferred from homology"/>
<name>O162_CONTC</name>
<organism>
    <name type="scientific">Conus terebra</name>
    <name type="common">Sea snail</name>
    <name type="synonym">Virgiconus terebra</name>
    <dbReference type="NCBI Taxonomy" id="89453"/>
    <lineage>
        <taxon>Eukaryota</taxon>
        <taxon>Metazoa</taxon>
        <taxon>Spiralia</taxon>
        <taxon>Lophotrochozoa</taxon>
        <taxon>Mollusca</taxon>
        <taxon>Gastropoda</taxon>
        <taxon>Caenogastropoda</taxon>
        <taxon>Neogastropoda</taxon>
        <taxon>Conoidea</taxon>
        <taxon>Conidae</taxon>
        <taxon>Conus</taxon>
        <taxon>Virgiconus</taxon>
    </lineage>
</organism>
<keyword id="KW-1015">Disulfide bond</keyword>
<keyword id="KW-0379">Hydroxylation</keyword>
<keyword id="KW-0872">Ion channel impairing toxin</keyword>
<keyword id="KW-0960">Knottin</keyword>
<keyword id="KW-0964">Secreted</keyword>
<keyword id="KW-0732">Signal</keyword>
<keyword id="KW-0800">Toxin</keyword>
<accession>P0DW77</accession>